<protein>
    <recommendedName>
        <fullName evidence="1">Triosephosphate isomerase</fullName>
        <shortName evidence="1">TIM</shortName>
        <shortName evidence="1">TPI</shortName>
        <ecNumber evidence="1">5.3.1.1</ecNumber>
    </recommendedName>
    <alternativeName>
        <fullName evidence="1">Triose-phosphate isomerase</fullName>
    </alternativeName>
</protein>
<accession>Q3ATA5</accession>
<name>TPIS_CHLCH</name>
<feature type="chain" id="PRO_0000307447" description="Triosephosphate isomerase">
    <location>
        <begin position="1"/>
        <end position="252"/>
    </location>
</feature>
<feature type="active site" description="Electrophile" evidence="1">
    <location>
        <position position="96"/>
    </location>
</feature>
<feature type="active site" description="Proton acceptor" evidence="1">
    <location>
        <position position="166"/>
    </location>
</feature>
<feature type="binding site" evidence="1">
    <location>
        <begin position="9"/>
        <end position="11"/>
    </location>
    <ligand>
        <name>substrate</name>
    </ligand>
</feature>
<feature type="binding site" evidence="1">
    <location>
        <position position="172"/>
    </location>
    <ligand>
        <name>substrate</name>
    </ligand>
</feature>
<feature type="binding site" evidence="1">
    <location>
        <position position="212"/>
    </location>
    <ligand>
        <name>substrate</name>
    </ligand>
</feature>
<feature type="binding site" evidence="1">
    <location>
        <begin position="233"/>
        <end position="234"/>
    </location>
    <ligand>
        <name>substrate</name>
    </ligand>
</feature>
<reference key="1">
    <citation type="submission" date="2005-08" db="EMBL/GenBank/DDBJ databases">
        <title>Complete sequence of Chlorobium chlorochromatii CaD3.</title>
        <authorList>
            <consortium name="US DOE Joint Genome Institute"/>
            <person name="Copeland A."/>
            <person name="Lucas S."/>
            <person name="Lapidus A."/>
            <person name="Barry K."/>
            <person name="Detter J.C."/>
            <person name="Glavina T."/>
            <person name="Hammon N."/>
            <person name="Israni S."/>
            <person name="Pitluck S."/>
            <person name="Bryant D."/>
            <person name="Schmutz J."/>
            <person name="Larimer F."/>
            <person name="Land M."/>
            <person name="Kyrpides N."/>
            <person name="Ivanova N."/>
            <person name="Richardson P."/>
        </authorList>
    </citation>
    <scope>NUCLEOTIDE SEQUENCE [LARGE SCALE GENOMIC DNA]</scope>
    <source>
        <strain>CaD3</strain>
    </source>
</reference>
<proteinExistence type="inferred from homology"/>
<organism>
    <name type="scientific">Chlorobium chlorochromatii (strain CaD3)</name>
    <dbReference type="NCBI Taxonomy" id="340177"/>
    <lineage>
        <taxon>Bacteria</taxon>
        <taxon>Pseudomonadati</taxon>
        <taxon>Chlorobiota</taxon>
        <taxon>Chlorobiia</taxon>
        <taxon>Chlorobiales</taxon>
        <taxon>Chlorobiaceae</taxon>
        <taxon>Chlorobium/Pelodictyon group</taxon>
        <taxon>Chlorobium</taxon>
    </lineage>
</organism>
<evidence type="ECO:0000255" key="1">
    <source>
        <dbReference type="HAMAP-Rule" id="MF_00147"/>
    </source>
</evidence>
<dbReference type="EC" id="5.3.1.1" evidence="1"/>
<dbReference type="EMBL" id="CP000108">
    <property type="protein sequence ID" value="ABB27770.1"/>
    <property type="molecule type" value="Genomic_DNA"/>
</dbReference>
<dbReference type="SMR" id="Q3ATA5"/>
<dbReference type="STRING" id="340177.Cag_0497"/>
<dbReference type="KEGG" id="cch:Cag_0497"/>
<dbReference type="eggNOG" id="COG0149">
    <property type="taxonomic scope" value="Bacteria"/>
</dbReference>
<dbReference type="HOGENOM" id="CLU_024251_2_1_10"/>
<dbReference type="OrthoDB" id="9809429at2"/>
<dbReference type="UniPathway" id="UPA00109">
    <property type="reaction ID" value="UER00189"/>
</dbReference>
<dbReference type="UniPathway" id="UPA00138"/>
<dbReference type="GO" id="GO:0005829">
    <property type="term" value="C:cytosol"/>
    <property type="evidence" value="ECO:0007669"/>
    <property type="project" value="TreeGrafter"/>
</dbReference>
<dbReference type="GO" id="GO:0004807">
    <property type="term" value="F:triose-phosphate isomerase activity"/>
    <property type="evidence" value="ECO:0007669"/>
    <property type="project" value="UniProtKB-UniRule"/>
</dbReference>
<dbReference type="GO" id="GO:0006094">
    <property type="term" value="P:gluconeogenesis"/>
    <property type="evidence" value="ECO:0007669"/>
    <property type="project" value="UniProtKB-UniRule"/>
</dbReference>
<dbReference type="GO" id="GO:0046166">
    <property type="term" value="P:glyceraldehyde-3-phosphate biosynthetic process"/>
    <property type="evidence" value="ECO:0007669"/>
    <property type="project" value="TreeGrafter"/>
</dbReference>
<dbReference type="GO" id="GO:0019563">
    <property type="term" value="P:glycerol catabolic process"/>
    <property type="evidence" value="ECO:0007669"/>
    <property type="project" value="TreeGrafter"/>
</dbReference>
<dbReference type="GO" id="GO:0006096">
    <property type="term" value="P:glycolytic process"/>
    <property type="evidence" value="ECO:0007669"/>
    <property type="project" value="UniProtKB-UniRule"/>
</dbReference>
<dbReference type="CDD" id="cd00311">
    <property type="entry name" value="TIM"/>
    <property type="match status" value="1"/>
</dbReference>
<dbReference type="FunFam" id="3.20.20.70:FF:000016">
    <property type="entry name" value="Triosephosphate isomerase"/>
    <property type="match status" value="1"/>
</dbReference>
<dbReference type="Gene3D" id="3.20.20.70">
    <property type="entry name" value="Aldolase class I"/>
    <property type="match status" value="1"/>
</dbReference>
<dbReference type="HAMAP" id="MF_00147_B">
    <property type="entry name" value="TIM_B"/>
    <property type="match status" value="1"/>
</dbReference>
<dbReference type="InterPro" id="IPR013785">
    <property type="entry name" value="Aldolase_TIM"/>
</dbReference>
<dbReference type="InterPro" id="IPR035990">
    <property type="entry name" value="TIM_sf"/>
</dbReference>
<dbReference type="InterPro" id="IPR022896">
    <property type="entry name" value="TrioseP_Isoase_bac/euk"/>
</dbReference>
<dbReference type="InterPro" id="IPR000652">
    <property type="entry name" value="Triosephosphate_isomerase"/>
</dbReference>
<dbReference type="InterPro" id="IPR020861">
    <property type="entry name" value="Triosephosphate_isomerase_AS"/>
</dbReference>
<dbReference type="NCBIfam" id="TIGR00419">
    <property type="entry name" value="tim"/>
    <property type="match status" value="1"/>
</dbReference>
<dbReference type="PANTHER" id="PTHR21139">
    <property type="entry name" value="TRIOSEPHOSPHATE ISOMERASE"/>
    <property type="match status" value="1"/>
</dbReference>
<dbReference type="PANTHER" id="PTHR21139:SF42">
    <property type="entry name" value="TRIOSEPHOSPHATE ISOMERASE"/>
    <property type="match status" value="1"/>
</dbReference>
<dbReference type="Pfam" id="PF00121">
    <property type="entry name" value="TIM"/>
    <property type="match status" value="1"/>
</dbReference>
<dbReference type="SUPFAM" id="SSF51351">
    <property type="entry name" value="Triosephosphate isomerase (TIM)"/>
    <property type="match status" value="1"/>
</dbReference>
<dbReference type="PROSITE" id="PS00171">
    <property type="entry name" value="TIM_1"/>
    <property type="match status" value="1"/>
</dbReference>
<dbReference type="PROSITE" id="PS51440">
    <property type="entry name" value="TIM_2"/>
    <property type="match status" value="1"/>
</dbReference>
<keyword id="KW-0963">Cytoplasm</keyword>
<keyword id="KW-0312">Gluconeogenesis</keyword>
<keyword id="KW-0324">Glycolysis</keyword>
<keyword id="KW-0413">Isomerase</keyword>
<comment type="function">
    <text evidence="1">Involved in the gluconeogenesis. Catalyzes stereospecifically the conversion of dihydroxyacetone phosphate (DHAP) to D-glyceraldehyde-3-phosphate (G3P).</text>
</comment>
<comment type="catalytic activity">
    <reaction evidence="1">
        <text>D-glyceraldehyde 3-phosphate = dihydroxyacetone phosphate</text>
        <dbReference type="Rhea" id="RHEA:18585"/>
        <dbReference type="ChEBI" id="CHEBI:57642"/>
        <dbReference type="ChEBI" id="CHEBI:59776"/>
        <dbReference type="EC" id="5.3.1.1"/>
    </reaction>
</comment>
<comment type="pathway">
    <text evidence="1">Carbohydrate biosynthesis; gluconeogenesis.</text>
</comment>
<comment type="pathway">
    <text evidence="1">Carbohydrate degradation; glycolysis; D-glyceraldehyde 3-phosphate from glycerone phosphate: step 1/1.</text>
</comment>
<comment type="subunit">
    <text evidence="1">Homodimer.</text>
</comment>
<comment type="subcellular location">
    <subcellularLocation>
        <location evidence="1">Cytoplasm</location>
    </subcellularLocation>
</comment>
<comment type="similarity">
    <text evidence="1">Belongs to the triosephosphate isomerase family.</text>
</comment>
<sequence length="252" mass="25956">MRKKIVVGNWKMNNGVAASEQLAADLLAALGSSFTGCDVGIAPTFLSLTTAGKVIAGSTIQLVAQNCHYENDGAYTGEVSAAMLKGAGCSSVIIGHSERRQFFGETNATVNLRVKKALAEGLDVILCVGETLAERESGVTGDIVSAQVREGLVGVSDISNVVIAYEPVWAIGTGKTATSAQAEEVHLMIRTLVTELYGEPAAQALRIQYGGSVKPSNAVELFAMPNIDGGLIGGASLNAADFVAIVQAAAGK</sequence>
<gene>
    <name evidence="1" type="primary">tpiA</name>
    <name type="ordered locus">Cag_0497</name>
</gene>